<proteinExistence type="inferred from homology"/>
<keyword id="KW-0028">Amino-acid biosynthesis</keyword>
<keyword id="KW-0368">Histidine biosynthesis</keyword>
<keyword id="KW-0378">Hydrolase</keyword>
<keyword id="KW-0486">Methionine biosynthesis</keyword>
<keyword id="KW-0511">Multifunctional enzyme</keyword>
<keyword id="KW-0521">NADP</keyword>
<keyword id="KW-0554">One-carbon metabolism</keyword>
<keyword id="KW-0560">Oxidoreductase</keyword>
<keyword id="KW-0658">Purine biosynthesis</keyword>
<protein>
    <recommendedName>
        <fullName evidence="1">Bifunctional protein FolD</fullName>
    </recommendedName>
    <domain>
        <recommendedName>
            <fullName evidence="1">Methylenetetrahydrofolate dehydrogenase</fullName>
            <ecNumber evidence="1">1.5.1.5</ecNumber>
        </recommendedName>
    </domain>
    <domain>
        <recommendedName>
            <fullName evidence="1">Methenyltetrahydrofolate cyclohydrolase</fullName>
            <ecNumber evidence="1">3.5.4.9</ecNumber>
        </recommendedName>
    </domain>
</protein>
<organism>
    <name type="scientific">Mycobacterium ulcerans (strain Agy99)</name>
    <dbReference type="NCBI Taxonomy" id="362242"/>
    <lineage>
        <taxon>Bacteria</taxon>
        <taxon>Bacillati</taxon>
        <taxon>Actinomycetota</taxon>
        <taxon>Actinomycetes</taxon>
        <taxon>Mycobacteriales</taxon>
        <taxon>Mycobacteriaceae</taxon>
        <taxon>Mycobacterium</taxon>
        <taxon>Mycobacterium ulcerans group</taxon>
    </lineage>
</organism>
<name>FOLD_MYCUA</name>
<comment type="function">
    <text evidence="1">Catalyzes the oxidation of 5,10-methylenetetrahydrofolate to 5,10-methenyltetrahydrofolate and then the hydrolysis of 5,10-methenyltetrahydrofolate to 10-formyltetrahydrofolate.</text>
</comment>
<comment type="catalytic activity">
    <reaction evidence="1">
        <text>(6R)-5,10-methylene-5,6,7,8-tetrahydrofolate + NADP(+) = (6R)-5,10-methenyltetrahydrofolate + NADPH</text>
        <dbReference type="Rhea" id="RHEA:22812"/>
        <dbReference type="ChEBI" id="CHEBI:15636"/>
        <dbReference type="ChEBI" id="CHEBI:57455"/>
        <dbReference type="ChEBI" id="CHEBI:57783"/>
        <dbReference type="ChEBI" id="CHEBI:58349"/>
        <dbReference type="EC" id="1.5.1.5"/>
    </reaction>
</comment>
<comment type="catalytic activity">
    <reaction evidence="1">
        <text>(6R)-5,10-methenyltetrahydrofolate + H2O = (6R)-10-formyltetrahydrofolate + H(+)</text>
        <dbReference type="Rhea" id="RHEA:23700"/>
        <dbReference type="ChEBI" id="CHEBI:15377"/>
        <dbReference type="ChEBI" id="CHEBI:15378"/>
        <dbReference type="ChEBI" id="CHEBI:57455"/>
        <dbReference type="ChEBI" id="CHEBI:195366"/>
        <dbReference type="EC" id="3.5.4.9"/>
    </reaction>
</comment>
<comment type="pathway">
    <text evidence="1">One-carbon metabolism; tetrahydrofolate interconversion.</text>
</comment>
<comment type="subunit">
    <text evidence="1">Homodimer.</text>
</comment>
<comment type="similarity">
    <text evidence="1">Belongs to the tetrahydrofolate dehydrogenase/cyclohydrolase family.</text>
</comment>
<gene>
    <name evidence="1" type="primary">folD</name>
    <name type="ordered locus">MUL_1428</name>
</gene>
<evidence type="ECO:0000255" key="1">
    <source>
        <dbReference type="HAMAP-Rule" id="MF_01576"/>
    </source>
</evidence>
<dbReference type="EC" id="1.5.1.5" evidence="1"/>
<dbReference type="EC" id="3.5.4.9" evidence="1"/>
<dbReference type="EMBL" id="CP000325">
    <property type="protein sequence ID" value="ABL03962.1"/>
    <property type="molecule type" value="Genomic_DNA"/>
</dbReference>
<dbReference type="RefSeq" id="WP_011739582.1">
    <property type="nucleotide sequence ID" value="NC_008611.1"/>
</dbReference>
<dbReference type="SMR" id="A0PNP3"/>
<dbReference type="KEGG" id="mul:MUL_1428"/>
<dbReference type="eggNOG" id="COG0190">
    <property type="taxonomic scope" value="Bacteria"/>
</dbReference>
<dbReference type="HOGENOM" id="CLU_034045_2_1_11"/>
<dbReference type="UniPathway" id="UPA00193"/>
<dbReference type="Proteomes" id="UP000000765">
    <property type="component" value="Chromosome"/>
</dbReference>
<dbReference type="GO" id="GO:0005829">
    <property type="term" value="C:cytosol"/>
    <property type="evidence" value="ECO:0007669"/>
    <property type="project" value="TreeGrafter"/>
</dbReference>
<dbReference type="GO" id="GO:0004477">
    <property type="term" value="F:methenyltetrahydrofolate cyclohydrolase activity"/>
    <property type="evidence" value="ECO:0007669"/>
    <property type="project" value="UniProtKB-UniRule"/>
</dbReference>
<dbReference type="GO" id="GO:0004488">
    <property type="term" value="F:methylenetetrahydrofolate dehydrogenase (NADP+) activity"/>
    <property type="evidence" value="ECO:0007669"/>
    <property type="project" value="UniProtKB-UniRule"/>
</dbReference>
<dbReference type="GO" id="GO:0000105">
    <property type="term" value="P:L-histidine biosynthetic process"/>
    <property type="evidence" value="ECO:0007669"/>
    <property type="project" value="UniProtKB-KW"/>
</dbReference>
<dbReference type="GO" id="GO:0009086">
    <property type="term" value="P:methionine biosynthetic process"/>
    <property type="evidence" value="ECO:0007669"/>
    <property type="project" value="UniProtKB-KW"/>
</dbReference>
<dbReference type="GO" id="GO:0006164">
    <property type="term" value="P:purine nucleotide biosynthetic process"/>
    <property type="evidence" value="ECO:0007669"/>
    <property type="project" value="UniProtKB-KW"/>
</dbReference>
<dbReference type="GO" id="GO:0035999">
    <property type="term" value="P:tetrahydrofolate interconversion"/>
    <property type="evidence" value="ECO:0007669"/>
    <property type="project" value="UniProtKB-UniRule"/>
</dbReference>
<dbReference type="CDD" id="cd01080">
    <property type="entry name" value="NAD_bind_m-THF_DH_Cyclohyd"/>
    <property type="match status" value="1"/>
</dbReference>
<dbReference type="FunFam" id="3.40.50.720:FF:000094">
    <property type="entry name" value="Bifunctional protein FolD"/>
    <property type="match status" value="1"/>
</dbReference>
<dbReference type="FunFam" id="3.40.50.10860:FF:000005">
    <property type="entry name" value="C-1-tetrahydrofolate synthase, cytoplasmic, putative"/>
    <property type="match status" value="1"/>
</dbReference>
<dbReference type="Gene3D" id="3.40.50.10860">
    <property type="entry name" value="Leucine Dehydrogenase, chain A, domain 1"/>
    <property type="match status" value="1"/>
</dbReference>
<dbReference type="Gene3D" id="3.40.50.720">
    <property type="entry name" value="NAD(P)-binding Rossmann-like Domain"/>
    <property type="match status" value="1"/>
</dbReference>
<dbReference type="HAMAP" id="MF_01576">
    <property type="entry name" value="THF_DHG_CYH"/>
    <property type="match status" value="1"/>
</dbReference>
<dbReference type="InterPro" id="IPR046346">
    <property type="entry name" value="Aminoacid_DH-like_N_sf"/>
</dbReference>
<dbReference type="InterPro" id="IPR036291">
    <property type="entry name" value="NAD(P)-bd_dom_sf"/>
</dbReference>
<dbReference type="InterPro" id="IPR000672">
    <property type="entry name" value="THF_DH/CycHdrlase"/>
</dbReference>
<dbReference type="InterPro" id="IPR020630">
    <property type="entry name" value="THF_DH/CycHdrlase_cat_dom"/>
</dbReference>
<dbReference type="InterPro" id="IPR020631">
    <property type="entry name" value="THF_DH/CycHdrlase_NAD-bd_dom"/>
</dbReference>
<dbReference type="NCBIfam" id="NF010789">
    <property type="entry name" value="PRK14193.1"/>
    <property type="match status" value="1"/>
</dbReference>
<dbReference type="PANTHER" id="PTHR48099:SF5">
    <property type="entry name" value="C-1-TETRAHYDROFOLATE SYNTHASE, CYTOPLASMIC"/>
    <property type="match status" value="1"/>
</dbReference>
<dbReference type="PANTHER" id="PTHR48099">
    <property type="entry name" value="C-1-TETRAHYDROFOLATE SYNTHASE, CYTOPLASMIC-RELATED"/>
    <property type="match status" value="1"/>
</dbReference>
<dbReference type="Pfam" id="PF00763">
    <property type="entry name" value="THF_DHG_CYH"/>
    <property type="match status" value="1"/>
</dbReference>
<dbReference type="Pfam" id="PF02882">
    <property type="entry name" value="THF_DHG_CYH_C"/>
    <property type="match status" value="1"/>
</dbReference>
<dbReference type="PRINTS" id="PR00085">
    <property type="entry name" value="THFDHDRGNASE"/>
</dbReference>
<dbReference type="SUPFAM" id="SSF53223">
    <property type="entry name" value="Aminoacid dehydrogenase-like, N-terminal domain"/>
    <property type="match status" value="1"/>
</dbReference>
<dbReference type="SUPFAM" id="SSF51735">
    <property type="entry name" value="NAD(P)-binding Rossmann-fold domains"/>
    <property type="match status" value="1"/>
</dbReference>
<sequence length="281" mass="29701">MGAITLDGKATRDEIFVDLKQRVSELNASGRTPGLATILVGEDPGSQAYVRGKHSDCAKVGITSIRRDLPADISTATLNETIDELNANPDCTGYIVQLPLPKHLDENAALERIDPGKDADGLHPTNLGRLVLNTPAPLPCTPRGIVHLLRRYDVPIAGAHVVVIGRGVTVGRPLGLLLTRRSENATVTLCHTGTRDLATLTRQADIIVAAVGVPHMLTADMVRPGAAVVDVGVSRVDGKLTGDVHPDVWEVAGHVSPNPGGVGPLTRAFLLTNVVELAEQR</sequence>
<feature type="chain" id="PRO_0000305848" description="Bifunctional protein FolD">
    <location>
        <begin position="1"/>
        <end position="281"/>
    </location>
</feature>
<feature type="binding site" evidence="1">
    <location>
        <begin position="165"/>
        <end position="167"/>
    </location>
    <ligand>
        <name>NADP(+)</name>
        <dbReference type="ChEBI" id="CHEBI:58349"/>
    </ligand>
</feature>
<feature type="binding site" evidence="1">
    <location>
        <position position="192"/>
    </location>
    <ligand>
        <name>NADP(+)</name>
        <dbReference type="ChEBI" id="CHEBI:58349"/>
    </ligand>
</feature>
<feature type="binding site" evidence="1">
    <location>
        <position position="233"/>
    </location>
    <ligand>
        <name>NADP(+)</name>
        <dbReference type="ChEBI" id="CHEBI:58349"/>
    </ligand>
</feature>
<reference key="1">
    <citation type="journal article" date="2007" name="Genome Res.">
        <title>Reductive evolution and niche adaptation inferred from the genome of Mycobacterium ulcerans, the causative agent of Buruli ulcer.</title>
        <authorList>
            <person name="Stinear T.P."/>
            <person name="Seemann T."/>
            <person name="Pidot S."/>
            <person name="Frigui W."/>
            <person name="Reysset G."/>
            <person name="Garnier T."/>
            <person name="Meurice G."/>
            <person name="Simon D."/>
            <person name="Bouchier C."/>
            <person name="Ma L."/>
            <person name="Tichit M."/>
            <person name="Porter J.L."/>
            <person name="Ryan J."/>
            <person name="Johnson P.D.R."/>
            <person name="Davies J.K."/>
            <person name="Jenkin G.A."/>
            <person name="Small P.L.C."/>
            <person name="Jones L.M."/>
            <person name="Tekaia F."/>
            <person name="Laval F."/>
            <person name="Daffe M."/>
            <person name="Parkhill J."/>
            <person name="Cole S.T."/>
        </authorList>
    </citation>
    <scope>NUCLEOTIDE SEQUENCE [LARGE SCALE GENOMIC DNA]</scope>
    <source>
        <strain>Agy99</strain>
    </source>
</reference>
<accession>A0PNP3</accession>